<gene>
    <name evidence="1" type="primary">pyrE</name>
    <name type="ordered locus">SCH_3656</name>
</gene>
<proteinExistence type="inferred from homology"/>
<reference key="1">
    <citation type="journal article" date="2005" name="Nucleic Acids Res.">
        <title>The genome sequence of Salmonella enterica serovar Choleraesuis, a highly invasive and resistant zoonotic pathogen.</title>
        <authorList>
            <person name="Chiu C.-H."/>
            <person name="Tang P."/>
            <person name="Chu C."/>
            <person name="Hu S."/>
            <person name="Bao Q."/>
            <person name="Yu J."/>
            <person name="Chou Y.-Y."/>
            <person name="Wang H.-S."/>
            <person name="Lee Y.-S."/>
        </authorList>
    </citation>
    <scope>NUCLEOTIDE SEQUENCE [LARGE SCALE GENOMIC DNA]</scope>
    <source>
        <strain>SC-B67</strain>
    </source>
</reference>
<comment type="function">
    <text evidence="1">Catalyzes the transfer of a ribosyl phosphate group from 5-phosphoribose 1-diphosphate to orotate, leading to the formation of orotidine monophosphate (OMP).</text>
</comment>
<comment type="catalytic activity">
    <reaction evidence="1">
        <text>orotidine 5'-phosphate + diphosphate = orotate + 5-phospho-alpha-D-ribose 1-diphosphate</text>
        <dbReference type="Rhea" id="RHEA:10380"/>
        <dbReference type="ChEBI" id="CHEBI:30839"/>
        <dbReference type="ChEBI" id="CHEBI:33019"/>
        <dbReference type="ChEBI" id="CHEBI:57538"/>
        <dbReference type="ChEBI" id="CHEBI:58017"/>
        <dbReference type="EC" id="2.4.2.10"/>
    </reaction>
</comment>
<comment type="cofactor">
    <cofactor evidence="1">
        <name>Mg(2+)</name>
        <dbReference type="ChEBI" id="CHEBI:18420"/>
    </cofactor>
</comment>
<comment type="pathway">
    <text evidence="1">Pyrimidine metabolism; UMP biosynthesis via de novo pathway; UMP from orotate: step 1/2.</text>
</comment>
<comment type="subunit">
    <text evidence="1">Homodimer.</text>
</comment>
<comment type="similarity">
    <text evidence="1">Belongs to the purine/pyrimidine phosphoribosyltransferase family. PyrE subfamily.</text>
</comment>
<feature type="chain" id="PRO_1000066292" description="Orotate phosphoribosyltransferase">
    <location>
        <begin position="1"/>
        <end position="213"/>
    </location>
</feature>
<feature type="binding site" description="in other chain" evidence="1">
    <location>
        <position position="26"/>
    </location>
    <ligand>
        <name>5-phospho-alpha-D-ribose 1-diphosphate</name>
        <dbReference type="ChEBI" id="CHEBI:58017"/>
        <note>ligand shared between dimeric partners</note>
    </ligand>
</feature>
<feature type="binding site" evidence="1">
    <location>
        <begin position="34"/>
        <end position="35"/>
    </location>
    <ligand>
        <name>orotate</name>
        <dbReference type="ChEBI" id="CHEBI:30839"/>
    </ligand>
</feature>
<feature type="binding site" description="in other chain" evidence="1">
    <location>
        <begin position="72"/>
        <end position="73"/>
    </location>
    <ligand>
        <name>5-phospho-alpha-D-ribose 1-diphosphate</name>
        <dbReference type="ChEBI" id="CHEBI:58017"/>
        <note>ligand shared between dimeric partners</note>
    </ligand>
</feature>
<feature type="binding site" evidence="1">
    <location>
        <position position="99"/>
    </location>
    <ligand>
        <name>5-phospho-alpha-D-ribose 1-diphosphate</name>
        <dbReference type="ChEBI" id="CHEBI:58017"/>
        <note>ligand shared between dimeric partners</note>
    </ligand>
</feature>
<feature type="binding site" description="in other chain" evidence="1">
    <location>
        <position position="100"/>
    </location>
    <ligand>
        <name>5-phospho-alpha-D-ribose 1-diphosphate</name>
        <dbReference type="ChEBI" id="CHEBI:58017"/>
        <note>ligand shared between dimeric partners</note>
    </ligand>
</feature>
<feature type="binding site" evidence="1">
    <location>
        <position position="103"/>
    </location>
    <ligand>
        <name>5-phospho-alpha-D-ribose 1-diphosphate</name>
        <dbReference type="ChEBI" id="CHEBI:58017"/>
        <note>ligand shared between dimeric partners</note>
    </ligand>
</feature>
<feature type="binding site" evidence="1">
    <location>
        <position position="105"/>
    </location>
    <ligand>
        <name>5-phospho-alpha-D-ribose 1-diphosphate</name>
        <dbReference type="ChEBI" id="CHEBI:58017"/>
        <note>ligand shared between dimeric partners</note>
    </ligand>
</feature>
<feature type="binding site" description="in other chain" evidence="1">
    <location>
        <begin position="124"/>
        <end position="132"/>
    </location>
    <ligand>
        <name>5-phospho-alpha-D-ribose 1-diphosphate</name>
        <dbReference type="ChEBI" id="CHEBI:58017"/>
        <note>ligand shared between dimeric partners</note>
    </ligand>
</feature>
<feature type="binding site" evidence="1">
    <location>
        <position position="128"/>
    </location>
    <ligand>
        <name>orotate</name>
        <dbReference type="ChEBI" id="CHEBI:30839"/>
    </ligand>
</feature>
<feature type="binding site" evidence="1">
    <location>
        <position position="156"/>
    </location>
    <ligand>
        <name>orotate</name>
        <dbReference type="ChEBI" id="CHEBI:30839"/>
    </ligand>
</feature>
<dbReference type="EC" id="2.4.2.10" evidence="1"/>
<dbReference type="EMBL" id="AE017220">
    <property type="protein sequence ID" value="AAX67562.1"/>
    <property type="molecule type" value="Genomic_DNA"/>
</dbReference>
<dbReference type="RefSeq" id="WP_000806167.1">
    <property type="nucleotide sequence ID" value="NC_006905.1"/>
</dbReference>
<dbReference type="SMR" id="Q57IA0"/>
<dbReference type="KEGG" id="sec:SCH_3656"/>
<dbReference type="HOGENOM" id="CLU_074878_0_1_6"/>
<dbReference type="UniPathway" id="UPA00070">
    <property type="reaction ID" value="UER00119"/>
</dbReference>
<dbReference type="Proteomes" id="UP000000538">
    <property type="component" value="Chromosome"/>
</dbReference>
<dbReference type="GO" id="GO:0005737">
    <property type="term" value="C:cytoplasm"/>
    <property type="evidence" value="ECO:0007669"/>
    <property type="project" value="TreeGrafter"/>
</dbReference>
<dbReference type="GO" id="GO:0000287">
    <property type="term" value="F:magnesium ion binding"/>
    <property type="evidence" value="ECO:0007669"/>
    <property type="project" value="UniProtKB-UniRule"/>
</dbReference>
<dbReference type="GO" id="GO:0004588">
    <property type="term" value="F:orotate phosphoribosyltransferase activity"/>
    <property type="evidence" value="ECO:0007669"/>
    <property type="project" value="UniProtKB-UniRule"/>
</dbReference>
<dbReference type="GO" id="GO:0006207">
    <property type="term" value="P:'de novo' pyrimidine nucleobase biosynthetic process"/>
    <property type="evidence" value="ECO:0007669"/>
    <property type="project" value="TreeGrafter"/>
</dbReference>
<dbReference type="GO" id="GO:0044205">
    <property type="term" value="P:'de novo' UMP biosynthetic process"/>
    <property type="evidence" value="ECO:0007669"/>
    <property type="project" value="UniProtKB-UniRule"/>
</dbReference>
<dbReference type="GO" id="GO:0046132">
    <property type="term" value="P:pyrimidine ribonucleoside biosynthetic process"/>
    <property type="evidence" value="ECO:0007669"/>
    <property type="project" value="TreeGrafter"/>
</dbReference>
<dbReference type="CDD" id="cd06223">
    <property type="entry name" value="PRTases_typeI"/>
    <property type="match status" value="1"/>
</dbReference>
<dbReference type="FunFam" id="3.40.50.2020:FF:000008">
    <property type="entry name" value="Orotate phosphoribosyltransferase"/>
    <property type="match status" value="1"/>
</dbReference>
<dbReference type="Gene3D" id="3.40.50.2020">
    <property type="match status" value="1"/>
</dbReference>
<dbReference type="HAMAP" id="MF_01208">
    <property type="entry name" value="PyrE"/>
    <property type="match status" value="1"/>
</dbReference>
<dbReference type="InterPro" id="IPR023031">
    <property type="entry name" value="OPRT"/>
</dbReference>
<dbReference type="InterPro" id="IPR004467">
    <property type="entry name" value="Or_phspho_trans_dom"/>
</dbReference>
<dbReference type="InterPro" id="IPR000836">
    <property type="entry name" value="PRibTrfase_dom"/>
</dbReference>
<dbReference type="InterPro" id="IPR029057">
    <property type="entry name" value="PRTase-like"/>
</dbReference>
<dbReference type="NCBIfam" id="TIGR00336">
    <property type="entry name" value="pyrE"/>
    <property type="match status" value="1"/>
</dbReference>
<dbReference type="PANTHER" id="PTHR46683">
    <property type="entry name" value="OROTATE PHOSPHORIBOSYLTRANSFERASE 1-RELATED"/>
    <property type="match status" value="1"/>
</dbReference>
<dbReference type="PANTHER" id="PTHR46683:SF1">
    <property type="entry name" value="OROTATE PHOSPHORIBOSYLTRANSFERASE 1-RELATED"/>
    <property type="match status" value="1"/>
</dbReference>
<dbReference type="Pfam" id="PF00156">
    <property type="entry name" value="Pribosyltran"/>
    <property type="match status" value="1"/>
</dbReference>
<dbReference type="SUPFAM" id="SSF53271">
    <property type="entry name" value="PRTase-like"/>
    <property type="match status" value="1"/>
</dbReference>
<dbReference type="PROSITE" id="PS00103">
    <property type="entry name" value="PUR_PYR_PR_TRANSFER"/>
    <property type="match status" value="1"/>
</dbReference>
<protein>
    <recommendedName>
        <fullName evidence="1">Orotate phosphoribosyltransferase</fullName>
        <shortName evidence="1">OPRT</shortName>
        <shortName evidence="1">OPRTase</shortName>
        <ecNumber evidence="1">2.4.2.10</ecNumber>
    </recommendedName>
</protein>
<name>PYRE_SALCH</name>
<evidence type="ECO:0000255" key="1">
    <source>
        <dbReference type="HAMAP-Rule" id="MF_01208"/>
    </source>
</evidence>
<organism>
    <name type="scientific">Salmonella choleraesuis (strain SC-B67)</name>
    <dbReference type="NCBI Taxonomy" id="321314"/>
    <lineage>
        <taxon>Bacteria</taxon>
        <taxon>Pseudomonadati</taxon>
        <taxon>Pseudomonadota</taxon>
        <taxon>Gammaproteobacteria</taxon>
        <taxon>Enterobacterales</taxon>
        <taxon>Enterobacteriaceae</taxon>
        <taxon>Salmonella</taxon>
    </lineage>
</organism>
<sequence length="213" mass="23562">MKPYQRQFIEFALNKQVLKFGEFTLKSGRKSPYFFNAGLFNTGRDLALLGRFYAEALVDSGIEFDLLFGPAYKGIPIATTTAVALAEHHDKDLPYCFNRKEAKDHGEGGSLVGSALQGRVMLVDDVITAGTAIRESMEIIQAHGATLAGVLISLDRQERGRGEISAIQEVERDYGCKVISIITLKDLIAYLEEKPDMAEHLAAVRAYREEFGV</sequence>
<keyword id="KW-0328">Glycosyltransferase</keyword>
<keyword id="KW-0460">Magnesium</keyword>
<keyword id="KW-0665">Pyrimidine biosynthesis</keyword>
<keyword id="KW-0808">Transferase</keyword>
<accession>Q57IA0</accession>